<name>ELV1A_XENLA</name>
<gene>
    <name type="primary">elavl1-a</name>
    <name evidence="1" type="synonym">elavl1</name>
    <name evidence="14" type="synonym">elrA</name>
</gene>
<reference evidence="12 13" key="1">
    <citation type="journal article" date="1995" name="Proc. Natl. Acad. Sci. U.S.A.">
        <title>A conserved family of elav-like genes in vertebrates.</title>
        <authorList>
            <person name="Good P.J."/>
        </authorList>
    </citation>
    <scope>NUCLEOTIDE SEQUENCE [MRNA] (ISOFORM 2)</scope>
    <scope>TISSUE SPECIFICITY</scope>
    <scope>DEVELOPMENTAL STAGE</scope>
    <source>
        <tissue evidence="7">Tail bud</tissue>
    </source>
</reference>
<reference evidence="12 14" key="2">
    <citation type="submission" date="2006-05" db="EMBL/GenBank/DDBJ databases">
        <authorList>
            <consortium name="NIH - Xenopus Gene Collection (XGC) project"/>
        </authorList>
    </citation>
    <scope>NUCLEOTIDE SEQUENCE [LARGE SCALE MRNA] (ISOFORM 1)</scope>
    <source>
        <tissue evidence="14">Oocyte</tissue>
    </source>
</reference>
<reference evidence="12" key="3">
    <citation type="journal article" date="1994" name="Mol. Cell. Biol.">
        <title>Further analysis of cytoplasmic polyadenylation in Xenopus embryos and identification of embryonic cytoplasmic polyadenylation element-binding proteins.</title>
        <authorList>
            <person name="Simon R."/>
            <person name="Richter J.D."/>
        </authorList>
    </citation>
    <scope>RNA-BINDING</scope>
</reference>
<reference evidence="12" key="4">
    <citation type="journal article" date="1996" name="Dev. Biol.">
        <title>Cytoplasmic polyadenylation of activin receptor mRNA and the control of pattern formation in Xenopus development.</title>
        <authorList>
            <person name="Simon R."/>
            <person name="Wu L."/>
            <person name="Richter J.D."/>
        </authorList>
    </citation>
    <scope>RNA-BINDING</scope>
    <scope>SUBCELLULAR LOCATION</scope>
</reference>
<reference evidence="12" key="5">
    <citation type="journal article" date="1997" name="Mol. Cell. Biol.">
        <title>The 36-kilodalton embryonic-type cytoplasmic polyadenylation element-binding protein in Xenopus laevis is ElrA, a member of the ELAV family of RNA-binding proteins.</title>
        <authorList>
            <person name="Wu L."/>
            <person name="Good P.J."/>
            <person name="Richter J.D."/>
        </authorList>
    </citation>
    <scope>FUNCTION</scope>
    <scope>RNA-BINDING</scope>
    <scope>SUBCELLULAR LOCATION</scope>
    <scope>DEVELOPMENTAL STAGE</scope>
</reference>
<reference evidence="12" key="6">
    <citation type="journal article" date="2001" name="RNA">
        <title>A 250-nucleotide UA-rich element in the 3' untranslated region of Xenopus laevis Vg1 mRNA represses translation both in vivo and in vitro.</title>
        <authorList>
            <person name="Otero L.J."/>
            <person name="Devaux A."/>
            <person name="Standart N."/>
        </authorList>
    </citation>
    <scope>RNA-BINDING</scope>
</reference>
<reference evidence="12" key="7">
    <citation type="journal article" date="2003" name="J. Biol. Chem.">
        <title>Xenopus cold-inducible RNA-binding protein 2 interacts with ElrA, the Xenopus homolog of HuR, and inhibits deadenylation of specific mRNAs.</title>
        <authorList>
            <person name="Aoki K."/>
            <person name="Matsumoto K."/>
            <person name="Tsujimoto M."/>
        </authorList>
    </citation>
    <scope>FUNCTION</scope>
    <scope>INTERACTION WITH CIRBP</scope>
</reference>
<reference evidence="12" key="8">
    <citation type="journal article" date="2005" name="Mol. Cell. Biol.">
        <title>The Xenopus ELAV protein ElrB represses Vg1 mRNA translation during oogenesis.</title>
        <authorList>
            <person name="Colegrove-Otero L.J."/>
            <person name="Devaux A."/>
            <person name="Standart N."/>
        </authorList>
    </citation>
    <scope>RNA-BINDING</scope>
    <scope>IDENTIFICATION IN A RIBONUCLEOPROTEIN COMPLEX</scope>
    <scope>SUBCELLULAR LOCATION</scope>
    <scope>DEVELOPMENTAL STAGE</scope>
</reference>
<reference evidence="12" key="9">
    <citation type="journal article" date="2006" name="FEBS Lett.">
        <title>Xenopus ElrB, but not ElrA, binds RNA as an oligomer: possible role of the linker.</title>
        <authorList>
            <person name="Devaux A."/>
            <person name="Colegrove-Otero L.J."/>
            <person name="Standart N."/>
        </authorList>
    </citation>
    <scope>RNA-BINDING</scope>
    <scope>LACK OF OLIGOMERIZATION</scope>
</reference>
<reference evidence="12" key="10">
    <citation type="journal article" date="2007" name="Nucleic Acids Res.">
        <title>ElrA binding to the 3'UTR of cyclin E1 mRNA requires polyadenylation elements.</title>
        <authorList>
            <person name="Slevin M.K."/>
            <person name="Gourronc F."/>
            <person name="Hartley R.S."/>
        </authorList>
    </citation>
    <scope>PUTATIVE FUNCTION</scope>
    <scope>RNA-BINDING</scope>
</reference>
<reference evidence="12" key="11">
    <citation type="journal article" date="2008" name="Biochem. Biophys. Res. Commun.">
        <title>ElrA and AUF1 differentially bind cyclin B2 mRNA.</title>
        <authorList>
            <person name="Guo X."/>
            <person name="Gourronc F."/>
            <person name="Audic Y."/>
            <person name="Lyons-Levy G."/>
            <person name="Mitchell T."/>
            <person name="Hartley R.S."/>
        </authorList>
    </citation>
    <scope>RNA-BINDING</scope>
</reference>
<reference evidence="12" key="12">
    <citation type="journal article" date="2009" name="J. Biol. Chem.">
        <title>Participation of Xenopus Elr-type proteins in vegetal mRNA localization during oogenesis.</title>
        <authorList>
            <person name="Arthur P.K."/>
            <person name="Claussen M."/>
            <person name="Koch S."/>
            <person name="Tarbashevich K."/>
            <person name="Jahn O."/>
            <person name="Pieler T."/>
        </authorList>
    </citation>
    <scope>FUNCTION</scope>
    <scope>RNA-BINDING</scope>
    <scope>IDENTIFICATION IN A RIBONUCLEOPROTEIN COMPLEX WITH IGF2BP3; STAU1; DDX6; LSM14B AND YBX2</scope>
    <scope>SUBCELLULAR LOCATION</scope>
</reference>
<accession>Q1JQ73</accession>
<accession>Q91582</accession>
<organism>
    <name type="scientific">Xenopus laevis</name>
    <name type="common">African clawed frog</name>
    <dbReference type="NCBI Taxonomy" id="8355"/>
    <lineage>
        <taxon>Eukaryota</taxon>
        <taxon>Metazoa</taxon>
        <taxon>Chordata</taxon>
        <taxon>Craniata</taxon>
        <taxon>Vertebrata</taxon>
        <taxon>Euteleostomi</taxon>
        <taxon>Amphibia</taxon>
        <taxon>Batrachia</taxon>
        <taxon>Anura</taxon>
        <taxon>Pipoidea</taxon>
        <taxon>Pipidae</taxon>
        <taxon>Xenopodinae</taxon>
        <taxon>Xenopus</taxon>
        <taxon>Xenopus</taxon>
    </lineage>
</organism>
<comment type="function">
    <text evidence="1 4 6 9">RNA-binding protein that binds to the 3'-UTR region of mRNAs and increases their stability. Involved in embryonic stem cells (ESCs) differentiation: preferentially binds mRNAs that are not methylated by N6-methyladenosine (m6A), stabilizing them, promoting ESCs differentiation (By similarity). Binds to poly-U elements and AU-rich elements (AREs) in the 3'-UTR of target mRNAs. May be involved in cytoplasmic mRNA polyadenylation. Acts cooperatively with cribp to stabilize AU-rich sequence (ARE)-containing mRNAs. May play a role during gastrulation. Required for the vegetal localization of vg1 mRNA.</text>
</comment>
<comment type="subunit">
    <text evidence="4 5 6">Interacts (via RRM3) with cirbp. Unable to form oligomers. Part of a ribonucleoprotein (RNP) complex, at least composed of elavl1/elrA and/or elavl2/elrB, igf2bp3/vg1RBP, ddx6/Xp54, ybx2/frgy2, lsm14b/rap55b and, in a subset of RNP complexes, stau1/staufen.</text>
</comment>
<comment type="subcellular location">
    <subcellularLocation>
        <location evidence="5 6 8 9">Cytoplasm</location>
    </subcellularLocation>
    <subcellularLocation>
        <location evidence="5 6 8 9">Cytoplasm</location>
        <location evidence="5 6 8 9">Cell cortex</location>
    </subcellularLocation>
    <text evidence="5 6 8 9">Enriched at the vegetal cortex in stage III and IV oocytes. Shows very weak nuclear localization.</text>
</comment>
<comment type="alternative products">
    <event type="alternative splicing"/>
    <isoform>
        <id>Q1JQ73-1</id>
        <name>1</name>
        <sequence type="displayed"/>
    </isoform>
    <isoform>
        <id>Q1JQ73-2</id>
        <name evidence="7">2</name>
        <sequence type="described" ref="VSP_038716"/>
    </isoform>
</comment>
<comment type="tissue specificity">
    <text evidence="7">Ubiquitously expressed in adults.</text>
</comment>
<comment type="developmental stage">
    <text evidence="5 7 9">Expressed both maternally and zygotically throughout development in oocytes, eggs, embryos and adults. Expression increases between oogenesis stages III and VI.</text>
</comment>
<comment type="similarity">
    <text evidence="2">Belongs to the RRM elav family.</text>
</comment>
<protein>
    <recommendedName>
        <fullName>ELAV-like protein 1-A</fullName>
    </recommendedName>
    <alternativeName>
        <fullName>36 kDa embryonic-type cytoplasmic polyadenylation element-binding protein</fullName>
        <shortName>36 kDa eCPE-binding protein</shortName>
        <shortName>36 kDa eCPEB</shortName>
        <shortName evidence="10">p36</shortName>
    </alternativeName>
    <alternativeName>
        <fullName evidence="14">Protein ElrA-A</fullName>
        <shortName evidence="14">ElrA</shortName>
    </alternativeName>
</protein>
<feature type="chain" id="PRO_0000391368" description="ELAV-like protein 1-A">
    <location>
        <begin position="1"/>
        <end position="337"/>
    </location>
</feature>
<feature type="domain" description="RRM 1" evidence="3">
    <location>
        <begin position="20"/>
        <end position="109"/>
    </location>
</feature>
<feature type="domain" description="RRM 2" evidence="3">
    <location>
        <begin position="117"/>
        <end position="197"/>
    </location>
</feature>
<feature type="domain" description="RRM 3" evidence="3">
    <location>
        <begin position="255"/>
        <end position="333"/>
    </location>
</feature>
<feature type="splice variant" id="VSP_038716" description="In isoform 2." evidence="11">
    <location>
        <begin position="59"/>
        <end position="69"/>
    </location>
</feature>
<keyword id="KW-0025">Alternative splicing</keyword>
<keyword id="KW-0963">Cytoplasm</keyword>
<keyword id="KW-0217">Developmental protein</keyword>
<keyword id="KW-0306">Gastrulation</keyword>
<keyword id="KW-1185">Reference proteome</keyword>
<keyword id="KW-0677">Repeat</keyword>
<keyword id="KW-0694">RNA-binding</keyword>
<sequence length="337" mass="37199">MSNGYEDHMDDVCRDDIGRTNLIVNYLPQNMTQDELRSLFSSIGEVESAKLIRDKVAGFEMRSSSLSKGHSLGYGFVNYLNAKDAERAINTLNGLRLQSKTIKVSFARPSSESIKDANLYISGLPRTMTQKDVEDMFLPFGHIINSRVLVDQATGLSRGVAFIRFDKRSEAEEAIASFNGHKPPGSSEPITVKFAANPNQNKNVALLSQICHSPARRFGGPVHHQAQRFRFSPMGVDHMSSISSVNVASSATSGWCIFVYNLGQDADEGILWQMFGPFGAVTNVKVIRDFNTNKCKGFGFVTMTNYEEAAMAIASLNGYRLGDKTLQVSFKTSKSHK</sequence>
<dbReference type="EMBL" id="U17596">
    <property type="protein sequence ID" value="AAA96942.1"/>
    <property type="molecule type" value="mRNA"/>
</dbReference>
<dbReference type="EMBL" id="BC116459">
    <property type="protein sequence ID" value="AAI16460.1"/>
    <property type="molecule type" value="mRNA"/>
</dbReference>
<dbReference type="PIR" id="I51675">
    <property type="entry name" value="I51675"/>
</dbReference>
<dbReference type="RefSeq" id="NP_001084078.1">
    <molecule id="Q1JQ73-1"/>
    <property type="nucleotide sequence ID" value="NM_001090609.1"/>
</dbReference>
<dbReference type="RefSeq" id="XP_018098715.1">
    <property type="nucleotide sequence ID" value="XM_018243226.1"/>
</dbReference>
<dbReference type="RefSeq" id="XP_018098723.1">
    <molecule id="Q1JQ73-2"/>
    <property type="nucleotide sequence ID" value="XM_018243234.1"/>
</dbReference>
<dbReference type="SMR" id="Q1JQ73"/>
<dbReference type="IntAct" id="Q1JQ73">
    <property type="interactions" value="2"/>
</dbReference>
<dbReference type="MINT" id="Q1JQ73"/>
<dbReference type="DNASU" id="399292"/>
<dbReference type="GeneID" id="399292"/>
<dbReference type="KEGG" id="xla:399292"/>
<dbReference type="AGR" id="Xenbase:XB-GENE-6254178"/>
<dbReference type="CTD" id="399292"/>
<dbReference type="Xenbase" id="XB-GENE-6254178">
    <property type="gene designation" value="elavl1.L"/>
</dbReference>
<dbReference type="OMA" id="QANTCIS"/>
<dbReference type="OrthoDB" id="266020at2759"/>
<dbReference type="CD-CODE" id="51D14917">
    <property type="entry name" value="L-bodies"/>
</dbReference>
<dbReference type="Proteomes" id="UP000186698">
    <property type="component" value="Chromosome 1L"/>
</dbReference>
<dbReference type="Bgee" id="399292">
    <property type="expression patterns" value="Expressed in egg cell and 19 other cell types or tissues"/>
</dbReference>
<dbReference type="GO" id="GO:0005938">
    <property type="term" value="C:cell cortex"/>
    <property type="evidence" value="ECO:0000314"/>
    <property type="project" value="UniProtKB"/>
</dbReference>
<dbReference type="GO" id="GO:0005737">
    <property type="term" value="C:cytoplasm"/>
    <property type="evidence" value="ECO:0000314"/>
    <property type="project" value="UniProtKB"/>
</dbReference>
<dbReference type="GO" id="GO:0005634">
    <property type="term" value="C:nucleus"/>
    <property type="evidence" value="ECO:0000314"/>
    <property type="project" value="UniProtKB"/>
</dbReference>
<dbReference type="GO" id="GO:1990904">
    <property type="term" value="C:ribonucleoprotein complex"/>
    <property type="evidence" value="ECO:0000314"/>
    <property type="project" value="UniProtKB"/>
</dbReference>
<dbReference type="GO" id="GO:0035925">
    <property type="term" value="F:mRNA 3'-UTR AU-rich region binding"/>
    <property type="evidence" value="ECO:0000250"/>
    <property type="project" value="UniProtKB"/>
</dbReference>
<dbReference type="GO" id="GO:0003730">
    <property type="term" value="F:mRNA 3'-UTR binding"/>
    <property type="evidence" value="ECO:0000314"/>
    <property type="project" value="UniProtKB"/>
</dbReference>
<dbReference type="GO" id="GO:0008266">
    <property type="term" value="F:poly(U) RNA binding"/>
    <property type="evidence" value="ECO:0000314"/>
    <property type="project" value="UniProtKB"/>
</dbReference>
<dbReference type="GO" id="GO:0070935">
    <property type="term" value="P:3'-UTR-mediated mRNA stabilization"/>
    <property type="evidence" value="ECO:0000250"/>
    <property type="project" value="UniProtKB"/>
</dbReference>
<dbReference type="GO" id="GO:0007369">
    <property type="term" value="P:gastrulation"/>
    <property type="evidence" value="ECO:0000315"/>
    <property type="project" value="UniProtKB"/>
</dbReference>
<dbReference type="GO" id="GO:0008298">
    <property type="term" value="P:intracellular mRNA localization"/>
    <property type="evidence" value="ECO:0000315"/>
    <property type="project" value="UniProtKB"/>
</dbReference>
<dbReference type="GO" id="GO:0048255">
    <property type="term" value="P:mRNA stabilization"/>
    <property type="evidence" value="ECO:0000316"/>
    <property type="project" value="UniProtKB"/>
</dbReference>
<dbReference type="GO" id="GO:0031440">
    <property type="term" value="P:regulation of mRNA 3'-end processing"/>
    <property type="evidence" value="ECO:0000305"/>
    <property type="project" value="UniProtKB"/>
</dbReference>
<dbReference type="GO" id="GO:2000036">
    <property type="term" value="P:regulation of stem cell population maintenance"/>
    <property type="evidence" value="ECO:0000250"/>
    <property type="project" value="UniProtKB"/>
</dbReference>
<dbReference type="CDD" id="cd12769">
    <property type="entry name" value="RRM1_HuR"/>
    <property type="match status" value="1"/>
</dbReference>
<dbReference type="CDD" id="cd12773">
    <property type="entry name" value="RRM2_HuR"/>
    <property type="match status" value="1"/>
</dbReference>
<dbReference type="CDD" id="cd12653">
    <property type="entry name" value="RRM3_HuR"/>
    <property type="match status" value="1"/>
</dbReference>
<dbReference type="FunFam" id="3.30.70.330:FF:000006">
    <property type="entry name" value="ELAV-like 3"/>
    <property type="match status" value="1"/>
</dbReference>
<dbReference type="FunFam" id="3.30.70.330:FF:000005">
    <property type="entry name" value="ELAV-like protein"/>
    <property type="match status" value="1"/>
</dbReference>
<dbReference type="FunFam" id="3.30.70.330:FF:000215">
    <property type="entry name" value="ELAV-like protein"/>
    <property type="match status" value="1"/>
</dbReference>
<dbReference type="Gene3D" id="3.30.70.330">
    <property type="match status" value="3"/>
</dbReference>
<dbReference type="InterPro" id="IPR006548">
    <property type="entry name" value="ELAD_HU_SF"/>
</dbReference>
<dbReference type="InterPro" id="IPR002343">
    <property type="entry name" value="Hud_Sxl_RNA"/>
</dbReference>
<dbReference type="InterPro" id="IPR034996">
    <property type="entry name" value="HuR_RRM2"/>
</dbReference>
<dbReference type="InterPro" id="IPR012677">
    <property type="entry name" value="Nucleotide-bd_a/b_plait_sf"/>
</dbReference>
<dbReference type="InterPro" id="IPR035979">
    <property type="entry name" value="RBD_domain_sf"/>
</dbReference>
<dbReference type="InterPro" id="IPR000504">
    <property type="entry name" value="RRM_dom"/>
</dbReference>
<dbReference type="NCBIfam" id="TIGR01661">
    <property type="entry name" value="ELAV_HUD_SF"/>
    <property type="match status" value="1"/>
</dbReference>
<dbReference type="PANTHER" id="PTHR10352">
    <property type="entry name" value="EUKARYOTIC TRANSLATION INITIATION FACTOR 3 SUBUNIT G"/>
    <property type="match status" value="1"/>
</dbReference>
<dbReference type="Pfam" id="PF00076">
    <property type="entry name" value="RRM_1"/>
    <property type="match status" value="3"/>
</dbReference>
<dbReference type="PRINTS" id="PR00961">
    <property type="entry name" value="HUDSXLRNA"/>
</dbReference>
<dbReference type="SMART" id="SM00360">
    <property type="entry name" value="RRM"/>
    <property type="match status" value="3"/>
</dbReference>
<dbReference type="SUPFAM" id="SSF54928">
    <property type="entry name" value="RNA-binding domain, RBD"/>
    <property type="match status" value="2"/>
</dbReference>
<dbReference type="PROSITE" id="PS50102">
    <property type="entry name" value="RRM"/>
    <property type="match status" value="3"/>
</dbReference>
<evidence type="ECO:0000250" key="1">
    <source>
        <dbReference type="UniProtKB" id="Q15717"/>
    </source>
</evidence>
<evidence type="ECO:0000255" key="2"/>
<evidence type="ECO:0000255" key="3">
    <source>
        <dbReference type="PROSITE-ProRule" id="PRU00176"/>
    </source>
</evidence>
<evidence type="ECO:0000269" key="4">
    <source>
    </source>
</evidence>
<evidence type="ECO:0000269" key="5">
    <source>
    </source>
</evidence>
<evidence type="ECO:0000269" key="6">
    <source>
    </source>
</evidence>
<evidence type="ECO:0000269" key="7">
    <source>
    </source>
</evidence>
<evidence type="ECO:0000269" key="8">
    <source>
    </source>
</evidence>
<evidence type="ECO:0000269" key="9">
    <source>
    </source>
</evidence>
<evidence type="ECO:0000303" key="10">
    <source>
    </source>
</evidence>
<evidence type="ECO:0000303" key="11">
    <source>
    </source>
</evidence>
<evidence type="ECO:0000305" key="12"/>
<evidence type="ECO:0000312" key="13">
    <source>
        <dbReference type="EMBL" id="AAA96942.1"/>
    </source>
</evidence>
<evidence type="ECO:0000312" key="14">
    <source>
        <dbReference type="EMBL" id="AAI16460.1"/>
    </source>
</evidence>
<proteinExistence type="evidence at protein level"/>